<protein>
    <recommendedName>
        <fullName evidence="1">FMN-dependent NADH:quinone oxidoreductase</fullName>
        <ecNumber evidence="1">1.6.5.-</ecNumber>
    </recommendedName>
    <alternativeName>
        <fullName evidence="1">Azo-dye reductase</fullName>
    </alternativeName>
    <alternativeName>
        <fullName evidence="1">FMN-dependent NADH-azo compound oxidoreductase</fullName>
    </alternativeName>
    <alternativeName>
        <fullName evidence="1">FMN-dependent NADH-azoreductase</fullName>
        <ecNumber evidence="1">1.7.1.17</ecNumber>
    </alternativeName>
</protein>
<dbReference type="EC" id="1.6.5.-" evidence="1"/>
<dbReference type="EC" id="1.7.1.17" evidence="1"/>
<dbReference type="EMBL" id="CP000503">
    <property type="protein sequence ID" value="ABM23128.1"/>
    <property type="molecule type" value="Genomic_DNA"/>
</dbReference>
<dbReference type="RefSeq" id="WP_011787674.1">
    <property type="nucleotide sequence ID" value="NC_008750.1"/>
</dbReference>
<dbReference type="SMR" id="A1REN3"/>
<dbReference type="GeneID" id="67441879"/>
<dbReference type="KEGG" id="shw:Sputw3181_0277"/>
<dbReference type="HOGENOM" id="CLU_088964_0_0_6"/>
<dbReference type="Proteomes" id="UP000002597">
    <property type="component" value="Chromosome"/>
</dbReference>
<dbReference type="GO" id="GO:0009055">
    <property type="term" value="F:electron transfer activity"/>
    <property type="evidence" value="ECO:0007669"/>
    <property type="project" value="UniProtKB-UniRule"/>
</dbReference>
<dbReference type="GO" id="GO:0010181">
    <property type="term" value="F:FMN binding"/>
    <property type="evidence" value="ECO:0007669"/>
    <property type="project" value="UniProtKB-UniRule"/>
</dbReference>
<dbReference type="GO" id="GO:0016652">
    <property type="term" value="F:oxidoreductase activity, acting on NAD(P)H as acceptor"/>
    <property type="evidence" value="ECO:0007669"/>
    <property type="project" value="UniProtKB-UniRule"/>
</dbReference>
<dbReference type="GO" id="GO:0016655">
    <property type="term" value="F:oxidoreductase activity, acting on NAD(P)H, quinone or similar compound as acceptor"/>
    <property type="evidence" value="ECO:0007669"/>
    <property type="project" value="InterPro"/>
</dbReference>
<dbReference type="Gene3D" id="3.40.50.360">
    <property type="match status" value="1"/>
</dbReference>
<dbReference type="HAMAP" id="MF_01216">
    <property type="entry name" value="Azoreductase_type1"/>
    <property type="match status" value="1"/>
</dbReference>
<dbReference type="InterPro" id="IPR003680">
    <property type="entry name" value="Flavodoxin_fold"/>
</dbReference>
<dbReference type="InterPro" id="IPR029039">
    <property type="entry name" value="Flavoprotein-like_sf"/>
</dbReference>
<dbReference type="InterPro" id="IPR050104">
    <property type="entry name" value="FMN-dep_NADH:Q_OxRdtase_AzoR1"/>
</dbReference>
<dbReference type="InterPro" id="IPR023048">
    <property type="entry name" value="NADH:quinone_OxRdtase_FMN_depd"/>
</dbReference>
<dbReference type="PANTHER" id="PTHR43741">
    <property type="entry name" value="FMN-DEPENDENT NADH-AZOREDUCTASE 1"/>
    <property type="match status" value="1"/>
</dbReference>
<dbReference type="PANTHER" id="PTHR43741:SF2">
    <property type="entry name" value="FMN-DEPENDENT NADH:QUINONE OXIDOREDUCTASE"/>
    <property type="match status" value="1"/>
</dbReference>
<dbReference type="Pfam" id="PF02525">
    <property type="entry name" value="Flavodoxin_2"/>
    <property type="match status" value="1"/>
</dbReference>
<dbReference type="SUPFAM" id="SSF52218">
    <property type="entry name" value="Flavoproteins"/>
    <property type="match status" value="1"/>
</dbReference>
<feature type="chain" id="PRO_1000066529" description="FMN-dependent NADH:quinone oxidoreductase">
    <location>
        <begin position="1"/>
        <end position="198"/>
    </location>
</feature>
<feature type="binding site" evidence="1">
    <location>
        <position position="10"/>
    </location>
    <ligand>
        <name>FMN</name>
        <dbReference type="ChEBI" id="CHEBI:58210"/>
    </ligand>
</feature>
<feature type="binding site" evidence="1">
    <location>
        <begin position="16"/>
        <end position="18"/>
    </location>
    <ligand>
        <name>FMN</name>
        <dbReference type="ChEBI" id="CHEBI:58210"/>
    </ligand>
</feature>
<feature type="binding site" evidence="1">
    <location>
        <begin position="94"/>
        <end position="97"/>
    </location>
    <ligand>
        <name>FMN</name>
        <dbReference type="ChEBI" id="CHEBI:58210"/>
    </ligand>
</feature>
<feature type="binding site" evidence="1">
    <location>
        <begin position="138"/>
        <end position="141"/>
    </location>
    <ligand>
        <name>FMN</name>
        <dbReference type="ChEBI" id="CHEBI:58210"/>
    </ligand>
</feature>
<accession>A1REN3</accession>
<reference key="1">
    <citation type="submission" date="2006-12" db="EMBL/GenBank/DDBJ databases">
        <title>Complete sequence of Shewanella sp. W3-18-1.</title>
        <authorList>
            <consortium name="US DOE Joint Genome Institute"/>
            <person name="Copeland A."/>
            <person name="Lucas S."/>
            <person name="Lapidus A."/>
            <person name="Barry K."/>
            <person name="Detter J.C."/>
            <person name="Glavina del Rio T."/>
            <person name="Hammon N."/>
            <person name="Israni S."/>
            <person name="Dalin E."/>
            <person name="Tice H."/>
            <person name="Pitluck S."/>
            <person name="Chain P."/>
            <person name="Malfatti S."/>
            <person name="Shin M."/>
            <person name="Vergez L."/>
            <person name="Schmutz J."/>
            <person name="Larimer F."/>
            <person name="Land M."/>
            <person name="Hauser L."/>
            <person name="Kyrpides N."/>
            <person name="Lykidis A."/>
            <person name="Tiedje J."/>
            <person name="Richardson P."/>
        </authorList>
    </citation>
    <scope>NUCLEOTIDE SEQUENCE [LARGE SCALE GENOMIC DNA]</scope>
    <source>
        <strain>W3-18-1</strain>
    </source>
</reference>
<sequence>MSKVLILKSSILGGYSQSAVLIDHLASHWENQGAAITVRDLGGKDVLPMVDGEIASGLRGGAELSARQQEMLALSDTLVAELKANDTIVIAAPMYNFTIPAQLKNWIDFIARAGVTFTYTETGSKGLVEGKRAVLVTTRGGAHKDGPTDHVVPYLKTVLAFIGITNVEVVYAEALNMGPEAHDKGMSEAKHSIDLLTA</sequence>
<keyword id="KW-0285">Flavoprotein</keyword>
<keyword id="KW-0288">FMN</keyword>
<keyword id="KW-0520">NAD</keyword>
<keyword id="KW-0560">Oxidoreductase</keyword>
<comment type="function">
    <text evidence="1">Quinone reductase that provides resistance to thiol-specific stress caused by electrophilic quinones.</text>
</comment>
<comment type="function">
    <text evidence="1">Also exhibits azoreductase activity. Catalyzes the reductive cleavage of the azo bond in aromatic azo compounds to the corresponding amines.</text>
</comment>
<comment type="catalytic activity">
    <reaction evidence="1">
        <text>2 a quinone + NADH + H(+) = 2 a 1,4-benzosemiquinone + NAD(+)</text>
        <dbReference type="Rhea" id="RHEA:65952"/>
        <dbReference type="ChEBI" id="CHEBI:15378"/>
        <dbReference type="ChEBI" id="CHEBI:57540"/>
        <dbReference type="ChEBI" id="CHEBI:57945"/>
        <dbReference type="ChEBI" id="CHEBI:132124"/>
        <dbReference type="ChEBI" id="CHEBI:134225"/>
    </reaction>
</comment>
<comment type="catalytic activity">
    <reaction evidence="1">
        <text>N,N-dimethyl-1,4-phenylenediamine + anthranilate + 2 NAD(+) = 2-(4-dimethylaminophenyl)diazenylbenzoate + 2 NADH + 2 H(+)</text>
        <dbReference type="Rhea" id="RHEA:55872"/>
        <dbReference type="ChEBI" id="CHEBI:15378"/>
        <dbReference type="ChEBI" id="CHEBI:15783"/>
        <dbReference type="ChEBI" id="CHEBI:16567"/>
        <dbReference type="ChEBI" id="CHEBI:57540"/>
        <dbReference type="ChEBI" id="CHEBI:57945"/>
        <dbReference type="ChEBI" id="CHEBI:71579"/>
        <dbReference type="EC" id="1.7.1.17"/>
    </reaction>
</comment>
<comment type="cofactor">
    <cofactor evidence="1">
        <name>FMN</name>
        <dbReference type="ChEBI" id="CHEBI:58210"/>
    </cofactor>
    <text evidence="1">Binds 1 FMN per subunit.</text>
</comment>
<comment type="subunit">
    <text evidence="1">Homodimer.</text>
</comment>
<comment type="similarity">
    <text evidence="1">Belongs to the azoreductase type 1 family.</text>
</comment>
<evidence type="ECO:0000255" key="1">
    <source>
        <dbReference type="HAMAP-Rule" id="MF_01216"/>
    </source>
</evidence>
<name>AZOR_SHESW</name>
<proteinExistence type="inferred from homology"/>
<gene>
    <name evidence="1" type="primary">azoR</name>
    <name type="ordered locus">Sputw3181_0277</name>
</gene>
<organism>
    <name type="scientific">Shewanella sp. (strain W3-18-1)</name>
    <dbReference type="NCBI Taxonomy" id="351745"/>
    <lineage>
        <taxon>Bacteria</taxon>
        <taxon>Pseudomonadati</taxon>
        <taxon>Pseudomonadota</taxon>
        <taxon>Gammaproteobacteria</taxon>
        <taxon>Alteromonadales</taxon>
        <taxon>Shewanellaceae</taxon>
        <taxon>Shewanella</taxon>
    </lineage>
</organism>